<organism>
    <name type="scientific">Mus musculus</name>
    <name type="common">Mouse</name>
    <dbReference type="NCBI Taxonomy" id="10090"/>
    <lineage>
        <taxon>Eukaryota</taxon>
        <taxon>Metazoa</taxon>
        <taxon>Chordata</taxon>
        <taxon>Craniata</taxon>
        <taxon>Vertebrata</taxon>
        <taxon>Euteleostomi</taxon>
        <taxon>Mammalia</taxon>
        <taxon>Eutheria</taxon>
        <taxon>Euarchontoglires</taxon>
        <taxon>Glires</taxon>
        <taxon>Rodentia</taxon>
        <taxon>Myomorpha</taxon>
        <taxon>Muroidea</taxon>
        <taxon>Muridae</taxon>
        <taxon>Murinae</taxon>
        <taxon>Mus</taxon>
        <taxon>Mus</taxon>
    </lineage>
</organism>
<accession>Q8K4J6</accession>
<accession>Q642U1</accession>
<proteinExistence type="evidence at protein level"/>
<reference key="1">
    <citation type="journal article" date="2002" name="J. Biol. Chem.">
        <title>Identification of a novel transcriptional activator, BSAC, by a functional cloning to inhibit tumor necrosis factor-induced cell death.</title>
        <authorList>
            <person name="Sasazuki T."/>
            <person name="Sawada Y."/>
            <person name="Sakon S."/>
            <person name="Kitamura T."/>
            <person name="Kishi T."/>
            <person name="Okazaki T."/>
            <person name="Katano M."/>
            <person name="Tanaka M."/>
            <person name="Watanabe M."/>
            <person name="Yagita H."/>
            <person name="Okumura K."/>
            <person name="Nakano H."/>
        </authorList>
    </citation>
    <scope>NUCLEOTIDE SEQUENCE [MRNA] (ISOFORM 1)</scope>
    <scope>FUNCTION</scope>
    <scope>SUBCELLULAR LOCATION</scope>
    <scope>TISSUE SPECIFICITY</scope>
    <source>
        <tissue>Spleen</tissue>
    </source>
</reference>
<reference key="2">
    <citation type="journal article" date="2002" name="Proc. Natl. Acad. Sci. U.S.A.">
        <title>Potentiation of serum response factor activity by a family of myocardin-related transcription factors.</title>
        <authorList>
            <person name="Wang D.-Z."/>
            <person name="Li S."/>
            <person name="Hockemeyer D."/>
            <person name="Sutherland L."/>
            <person name="Wang Z."/>
            <person name="Schratt G."/>
            <person name="Richardson J.A."/>
            <person name="Nordheim A."/>
            <person name="Olson E.N."/>
        </authorList>
    </citation>
    <scope>NUCLEOTIDE SEQUENCE [MRNA] (ISOFORM 2)</scope>
    <scope>TISSUE SPECIFICITY</scope>
    <scope>DEVELOPMENTAL STAGE</scope>
    <source>
        <strain>C57BL/6J</strain>
    </source>
</reference>
<reference key="3">
    <citation type="journal article" date="2005" name="Science">
        <title>The transcriptional landscape of the mammalian genome.</title>
        <authorList>
            <person name="Carninci P."/>
            <person name="Kasukawa T."/>
            <person name="Katayama S."/>
            <person name="Gough J."/>
            <person name="Frith M.C."/>
            <person name="Maeda N."/>
            <person name="Oyama R."/>
            <person name="Ravasi T."/>
            <person name="Lenhard B."/>
            <person name="Wells C."/>
            <person name="Kodzius R."/>
            <person name="Shimokawa K."/>
            <person name="Bajic V.B."/>
            <person name="Brenner S.E."/>
            <person name="Batalov S."/>
            <person name="Forrest A.R."/>
            <person name="Zavolan M."/>
            <person name="Davis M.J."/>
            <person name="Wilming L.G."/>
            <person name="Aidinis V."/>
            <person name="Allen J.E."/>
            <person name="Ambesi-Impiombato A."/>
            <person name="Apweiler R."/>
            <person name="Aturaliya R.N."/>
            <person name="Bailey T.L."/>
            <person name="Bansal M."/>
            <person name="Baxter L."/>
            <person name="Beisel K.W."/>
            <person name="Bersano T."/>
            <person name="Bono H."/>
            <person name="Chalk A.M."/>
            <person name="Chiu K.P."/>
            <person name="Choudhary V."/>
            <person name="Christoffels A."/>
            <person name="Clutterbuck D.R."/>
            <person name="Crowe M.L."/>
            <person name="Dalla E."/>
            <person name="Dalrymple B.P."/>
            <person name="de Bono B."/>
            <person name="Della Gatta G."/>
            <person name="di Bernardo D."/>
            <person name="Down T."/>
            <person name="Engstrom P."/>
            <person name="Fagiolini M."/>
            <person name="Faulkner G."/>
            <person name="Fletcher C.F."/>
            <person name="Fukushima T."/>
            <person name="Furuno M."/>
            <person name="Futaki S."/>
            <person name="Gariboldi M."/>
            <person name="Georgii-Hemming P."/>
            <person name="Gingeras T.R."/>
            <person name="Gojobori T."/>
            <person name="Green R.E."/>
            <person name="Gustincich S."/>
            <person name="Harbers M."/>
            <person name="Hayashi Y."/>
            <person name="Hensch T.K."/>
            <person name="Hirokawa N."/>
            <person name="Hill D."/>
            <person name="Huminiecki L."/>
            <person name="Iacono M."/>
            <person name="Ikeo K."/>
            <person name="Iwama A."/>
            <person name="Ishikawa T."/>
            <person name="Jakt M."/>
            <person name="Kanapin A."/>
            <person name="Katoh M."/>
            <person name="Kawasawa Y."/>
            <person name="Kelso J."/>
            <person name="Kitamura H."/>
            <person name="Kitano H."/>
            <person name="Kollias G."/>
            <person name="Krishnan S.P."/>
            <person name="Kruger A."/>
            <person name="Kummerfeld S.K."/>
            <person name="Kurochkin I.V."/>
            <person name="Lareau L.F."/>
            <person name="Lazarevic D."/>
            <person name="Lipovich L."/>
            <person name="Liu J."/>
            <person name="Liuni S."/>
            <person name="McWilliam S."/>
            <person name="Madan Babu M."/>
            <person name="Madera M."/>
            <person name="Marchionni L."/>
            <person name="Matsuda H."/>
            <person name="Matsuzawa S."/>
            <person name="Miki H."/>
            <person name="Mignone F."/>
            <person name="Miyake S."/>
            <person name="Morris K."/>
            <person name="Mottagui-Tabar S."/>
            <person name="Mulder N."/>
            <person name="Nakano N."/>
            <person name="Nakauchi H."/>
            <person name="Ng P."/>
            <person name="Nilsson R."/>
            <person name="Nishiguchi S."/>
            <person name="Nishikawa S."/>
            <person name="Nori F."/>
            <person name="Ohara O."/>
            <person name="Okazaki Y."/>
            <person name="Orlando V."/>
            <person name="Pang K.C."/>
            <person name="Pavan W.J."/>
            <person name="Pavesi G."/>
            <person name="Pesole G."/>
            <person name="Petrovsky N."/>
            <person name="Piazza S."/>
            <person name="Reed J."/>
            <person name="Reid J.F."/>
            <person name="Ring B.Z."/>
            <person name="Ringwald M."/>
            <person name="Rost B."/>
            <person name="Ruan Y."/>
            <person name="Salzberg S.L."/>
            <person name="Sandelin A."/>
            <person name="Schneider C."/>
            <person name="Schoenbach C."/>
            <person name="Sekiguchi K."/>
            <person name="Semple C.A."/>
            <person name="Seno S."/>
            <person name="Sessa L."/>
            <person name="Sheng Y."/>
            <person name="Shibata Y."/>
            <person name="Shimada H."/>
            <person name="Shimada K."/>
            <person name="Silva D."/>
            <person name="Sinclair B."/>
            <person name="Sperling S."/>
            <person name="Stupka E."/>
            <person name="Sugiura K."/>
            <person name="Sultana R."/>
            <person name="Takenaka Y."/>
            <person name="Taki K."/>
            <person name="Tammoja K."/>
            <person name="Tan S.L."/>
            <person name="Tang S."/>
            <person name="Taylor M.S."/>
            <person name="Tegner J."/>
            <person name="Teichmann S.A."/>
            <person name="Ueda H.R."/>
            <person name="van Nimwegen E."/>
            <person name="Verardo R."/>
            <person name="Wei C.L."/>
            <person name="Yagi K."/>
            <person name="Yamanishi H."/>
            <person name="Zabarovsky E."/>
            <person name="Zhu S."/>
            <person name="Zimmer A."/>
            <person name="Hide W."/>
            <person name="Bult C."/>
            <person name="Grimmond S.M."/>
            <person name="Teasdale R.D."/>
            <person name="Liu E.T."/>
            <person name="Brusic V."/>
            <person name="Quackenbush J."/>
            <person name="Wahlestedt C."/>
            <person name="Mattick J.S."/>
            <person name="Hume D.A."/>
            <person name="Kai C."/>
            <person name="Sasaki D."/>
            <person name="Tomaru Y."/>
            <person name="Fukuda S."/>
            <person name="Kanamori-Katayama M."/>
            <person name="Suzuki M."/>
            <person name="Aoki J."/>
            <person name="Arakawa T."/>
            <person name="Iida J."/>
            <person name="Imamura K."/>
            <person name="Itoh M."/>
            <person name="Kato T."/>
            <person name="Kawaji H."/>
            <person name="Kawagashira N."/>
            <person name="Kawashima T."/>
            <person name="Kojima M."/>
            <person name="Kondo S."/>
            <person name="Konno H."/>
            <person name="Nakano K."/>
            <person name="Ninomiya N."/>
            <person name="Nishio T."/>
            <person name="Okada M."/>
            <person name="Plessy C."/>
            <person name="Shibata K."/>
            <person name="Shiraki T."/>
            <person name="Suzuki S."/>
            <person name="Tagami M."/>
            <person name="Waki K."/>
            <person name="Watahiki A."/>
            <person name="Okamura-Oho Y."/>
            <person name="Suzuki H."/>
            <person name="Kawai J."/>
            <person name="Hayashizaki Y."/>
        </authorList>
    </citation>
    <scope>NUCLEOTIDE SEQUENCE [LARGE SCALE MRNA] (ISOFORM 2)</scope>
    <source>
        <strain>C57BL/6J</strain>
        <tissue>Brain cortex</tissue>
    </source>
</reference>
<reference key="4">
    <citation type="journal article" date="2004" name="Genome Res.">
        <title>The status, quality, and expansion of the NIH full-length cDNA project: the Mammalian Gene Collection (MGC).</title>
        <authorList>
            <consortium name="The MGC Project Team"/>
        </authorList>
    </citation>
    <scope>NUCLEOTIDE SEQUENCE [LARGE SCALE MRNA] (ISOFORM 2)</scope>
    <source>
        <strain>C57BL/6J</strain>
        <tissue>Brain</tissue>
    </source>
</reference>
<reference key="5">
    <citation type="journal article" date="2003" name="Cell">
        <title>Actin dynamics control SRF activity by regulation of its coactivator MAL.</title>
        <authorList>
            <person name="Miralles F."/>
            <person name="Posern G."/>
            <person name="Zaromytidou A.I."/>
            <person name="Treisman R."/>
        </authorList>
    </citation>
    <scope>FUNCTION</scope>
    <scope>SUBCELLULAR LOCATION</scope>
    <scope>INTERACTION WITH SRF AND ACTIN</scope>
</reference>
<reference key="6">
    <citation type="journal article" date="2007" name="Science">
        <title>Nuclear actin regulates dynamic subcellular localization and activity of the SRF cofactor MAL.</title>
        <authorList>
            <person name="Vartiainen M.K."/>
            <person name="Guettler S."/>
            <person name="Larijani B."/>
            <person name="Treisman R."/>
        </authorList>
    </citation>
    <scope>FUNCTION</scope>
    <scope>SUBCELLULAR LOCATION</scope>
    <scope>INTERACTION WITH ACTIN</scope>
    <scope>MUTAGENESIS OF ARG-24; ARG-68 AND ARG-112</scope>
</reference>
<reference key="7">
    <citation type="journal article" date="2009" name="Nat. Cell Biol.">
        <title>SCAI acts as a suppressor of cancer cell invasion through the transcriptional control of beta1-integrin.</title>
        <authorList>
            <person name="Brandt D.T."/>
            <person name="Baarlink C."/>
            <person name="Kitzing T.M."/>
            <person name="Kremmer E."/>
            <person name="Ivaska J."/>
            <person name="Nollau P."/>
            <person name="Grosse R."/>
        </authorList>
    </citation>
    <scope>FUNCTION</scope>
    <scope>INTERACTION WITH ACTB; SCAI AND SRF</scope>
    <scope>SUBCELLULAR LOCATION</scope>
</reference>
<reference key="8">
    <citation type="journal article" date="2010" name="Cell">
        <title>A tissue-specific atlas of mouse protein phosphorylation and expression.</title>
        <authorList>
            <person name="Huttlin E.L."/>
            <person name="Jedrychowski M.P."/>
            <person name="Elias J.E."/>
            <person name="Goswami T."/>
            <person name="Rad R."/>
            <person name="Beausoleil S.A."/>
            <person name="Villen J."/>
            <person name="Haas W."/>
            <person name="Sowa M.E."/>
            <person name="Gygi S.P."/>
        </authorList>
    </citation>
    <scope>PHOSPHORYLATION [LARGE SCALE ANALYSIS] AT THR-488</scope>
    <scope>IDENTIFICATION BY MASS SPECTROMETRY [LARGE SCALE ANALYSIS]</scope>
    <source>
        <tissue>Brain</tissue>
    </source>
</reference>
<reference key="9">
    <citation type="journal article" date="2010" name="EMBO J.">
        <title>An actin-regulated importin alpha/beta-dependent extended bipartite NLS directs nuclear import of MRTF-A.</title>
        <authorList>
            <person name="Pawlowski R."/>
            <person name="Rajakylae E.K."/>
            <person name="Vartiainen M.K."/>
            <person name="Treisman R."/>
        </authorList>
    </citation>
    <scope>SUBCELLULAR LOCATION</scope>
    <scope>MUTAGENESIS OF 62-LYS--LYS-64 AND 95-LYS--LYS-97</scope>
</reference>
<reference key="10">
    <citation type="journal article" date="2013" name="Science">
        <title>Nuclear actin network assembly by formins regulates the SRF coactivator MAL.</title>
        <authorList>
            <person name="Baarlink C."/>
            <person name="Wang H."/>
            <person name="Grosse R."/>
        </authorList>
    </citation>
    <scope>FUNCTION</scope>
</reference>
<reference key="11">
    <citation type="journal article" date="2014" name="Genes Dev.">
        <title>Rho-actin signaling to the MRTF coactivators dominates the immediate transcriptional response to serum in fibroblasts.</title>
        <authorList>
            <person name="Esnault C."/>
            <person name="Stewart A."/>
            <person name="Gualdrini F."/>
            <person name="East P."/>
            <person name="Horswell S."/>
            <person name="Matthews N."/>
            <person name="Treisman R."/>
        </authorList>
    </citation>
    <scope>FUNCTION</scope>
</reference>
<reference key="12">
    <citation type="journal article" date="2015" name="J. Biol. Chem.">
        <title>Nuclear F-actin formation and reorganization upon cell spreading.</title>
        <authorList>
            <person name="Plessner M."/>
            <person name="Melak M."/>
            <person name="Chinchilla P."/>
            <person name="Baarlink C."/>
            <person name="Grosse R."/>
        </authorList>
    </citation>
    <scope>FUNCTION</scope>
    <scope>SUBCELLULAR LOCATION</scope>
</reference>
<reference key="13">
    <citation type="journal article" date="2008" name="EMBO J.">
        <title>Molecular basis for G-actin binding to RPEL motifs from the serum response factor coactivator MAL.</title>
        <authorList>
            <person name="Mouilleron S."/>
            <person name="Guettler S."/>
            <person name="Langer C.A."/>
            <person name="Treisman R."/>
            <person name="McDonald N.Q."/>
        </authorList>
    </citation>
    <scope>X-RAY CRYSTALLOGRAPHY (1.45 ANGSTROMS) OF 54-85 IN COMPLEX WITH G-ACTIN</scope>
    <scope>X-RAY CRYSTALLOGRAPHY (2.35 ANGSTROMS) OF 16-41 IN COMPLEX WITH G-ACTIN</scope>
    <scope>SUBCELLULAR LOCATION</scope>
</reference>
<reference key="14">
    <citation type="journal article" date="2016" name="Elife">
        <title>Phosphorylation acts positively and negatively to regulate MRTF-A subcellular localisation and activity.</title>
        <authorList>
            <person name="Panayiotou R."/>
            <person name="Miralles F."/>
            <person name="Pawlowski R."/>
            <person name="Diring J."/>
            <person name="Flynn H.R."/>
            <person name="Skehel M."/>
            <person name="Treisman R."/>
        </authorList>
    </citation>
    <scope>PHOSPHORYLATION AT SER-41; SER-159; SER-174; SER-191; SER-349; SER-351; THR-352; SER-355; SER-358; THR-360; SER-423; SER-484; THR-485; SER-487; THR-488; SER-492; THR-494; SER-496; SER-520; SER-530; SER-544; SER-548; SER-605; SER-606; SER-651; SER-687; SER-718; SER-724; SER-728; SER-810; THR-822; SER-826; SER-840; THR-842 AND SER-892</scope>
    <scope>INTERACTION WITH ACTIN</scope>
    <scope>SUBCELLULAR LOCATION</scope>
</reference>
<reference evidence="26 27" key="15">
    <citation type="journal article" date="2011" name="Sci. Signal.">
        <title>Structure of a pentavalent G-actin*MRTF-A complex reveals how G-actin controls nucleocytoplasmic shuttling of a transcriptional coactivator.</title>
        <authorList>
            <person name="Mouilleron S."/>
            <person name="Langer C.A."/>
            <person name="Guettler S."/>
            <person name="McDonald N.Q."/>
            <person name="Treisman R."/>
        </authorList>
    </citation>
    <scope>X-RAY CRYSTALLOGRAPHY (3.10 ANGSTROMS) OF 16-142 IN COMPLEX WITH G-ACTIN</scope>
    <scope>SUBCELLULAR LOCATION</scope>
    <scope>DOMAIN</scope>
    <scope>MUTAGENESIS OF PHE-45; GLN-48; LEU-52; ARG-54; ARG-56; LEU-89; LYS-92; LEU-96; ARG-98 AND ARG-100</scope>
</reference>
<protein>
    <recommendedName>
        <fullName evidence="24">Myocardin-related transcription factor A</fullName>
        <shortName evidence="23">MRTF-A</shortName>
    </recommendedName>
    <alternativeName>
        <fullName evidence="17">Basic SAP coiled-coil transcription activator</fullName>
    </alternativeName>
    <alternativeName>
        <fullName>MKL/myocardin-like protein 1</fullName>
    </alternativeName>
    <alternativeName>
        <fullName>Megakaryoblastic leukemia 1 protein homolog</fullName>
    </alternativeName>
    <alternativeName>
        <fullName evidence="19 22">Megakaryocytic acute leukemia protein homolog</fullName>
    </alternativeName>
</protein>
<sequence>MTLLEPEMLMMAVQSVLQLKLQQRRTREELVSQGIMPPLKSPAAFHEQRRSLERARTEDYLKRKIRSRPERAELVRMHILEETSAEPSLQAKQLKLKRARLADDLNEKIAQRPGPMELVEKNILPVESSLKEAIIVGQVNYPKVADSSSFDEDSSDALSPEQPASHESQGSVPSPLESRVSDPLPSATSISPTQVLSQLPMAPDPGETLFLAEQPPLPPAPLLPPSLANGSIVPTAKPAPTLIKQSQPKSASEKSQRSKKAKELKPKVKKLKYHQYIPPDQKQDKGAPAMDSSYAKILQQQQLFLQLQILNQQQQQQQQQHYNYQAILPAPPKPSAETPGSSAPTPSRSLSTSSSPSSGTPGPSGLARQSSTALAAKPGALPANLDDMKVAELKQELKLRSLPVSGTKTELIERLRAYQDQVSPAPGAPKAPATTSVLSKAGEVVVAFPAALLSTGSALVTAGLAPAEMVVATVTSNGMVKFGSTGSTPPVSPTPSERSLLSTGDENSTPGDAFGEMVTSPLTQLTLQASPLQIVKEEGARAASCCLSPGARAELEGLDKDQMLQEKDKQIEELTRMLQQKQQLVELLRLQLEQQKRAQQPAPASSPVKRESGFSSCQLSCQPQGSAHAFGSGLVVPTTNHGDTQAPAPESPPVVVKQEAGPPEPDLAPSSQLLLGSQGTSFLKRVSPPTLVTDSTGTHLILTVTNKSADGPGLPAGSPQQPLSQPGSPAPGPPAQMDLEHPPQPPFATPTSLLKKEPPGYEETVTQQPKQQENGSSSQHMDDLFDILIQSGEISADFKEPPSLPGKEKSPPAAAAYGPPLTPQPSPLSELPQAAPPPGSPTLPGRLEDFLESSTGLPLLTSGHEGPEPLSLIDDLHSQMLSSSAILDHPPSPMDTSELHFAPEPSSGMGLDLAVGHLDSMDWLELSSGGPVLSLAPLSTAAPSLFSMDFLDGHDLQLHWDSCL</sequence>
<feature type="chain" id="PRO_0000126626" description="Myocardin-related transcription factor A">
    <location>
        <begin position="1"/>
        <end position="964"/>
    </location>
</feature>
<feature type="repeat" description="RPEL 1">
    <location>
        <begin position="15"/>
        <end position="40"/>
    </location>
</feature>
<feature type="repeat" description="RPEL 2">
    <location>
        <begin position="59"/>
        <end position="84"/>
    </location>
</feature>
<feature type="repeat" description="RPEL 3">
    <location>
        <begin position="103"/>
        <end position="128"/>
    </location>
</feature>
<feature type="domain" description="SAP" evidence="3">
    <location>
        <begin position="385"/>
        <end position="419"/>
    </location>
</feature>
<feature type="region of interest" description="Mediates interaction with SCAI and ACTB" evidence="10">
    <location>
        <begin position="1"/>
        <end position="291"/>
    </location>
</feature>
<feature type="region of interest" description="Intervening spacer sequence 1" evidence="9">
    <location>
        <begin position="41"/>
        <end position="58"/>
    </location>
</feature>
<feature type="region of interest" description="Intervening spacer sequence 2" evidence="9">
    <location>
        <begin position="85"/>
        <end position="102"/>
    </location>
</feature>
<feature type="region of interest" description="Disordered" evidence="4">
    <location>
        <begin position="145"/>
        <end position="292"/>
    </location>
</feature>
<feature type="region of interest" description="Disordered" evidence="4">
    <location>
        <begin position="328"/>
        <end position="371"/>
    </location>
</feature>
<feature type="region of interest" description="Disordered" evidence="4">
    <location>
        <begin position="484"/>
        <end position="508"/>
    </location>
</feature>
<feature type="region of interest" description="Disordered" evidence="4">
    <location>
        <begin position="638"/>
        <end position="673"/>
    </location>
</feature>
<feature type="region of interest" description="Disordered" evidence="4">
    <location>
        <begin position="706"/>
        <end position="779"/>
    </location>
</feature>
<feature type="region of interest" description="Disordered" evidence="4">
    <location>
        <begin position="796"/>
        <end position="849"/>
    </location>
</feature>
<feature type="coiled-coil region" evidence="2">
    <location>
        <begin position="552"/>
        <end position="600"/>
    </location>
</feature>
<feature type="short sequence motif" description="Bipartite Nuclear localization signal" evidence="11">
    <location>
        <begin position="62"/>
        <end position="100"/>
    </location>
</feature>
<feature type="compositionally biased region" description="Polar residues" evidence="4">
    <location>
        <begin position="186"/>
        <end position="197"/>
    </location>
</feature>
<feature type="compositionally biased region" description="Pro residues" evidence="4">
    <location>
        <begin position="215"/>
        <end position="224"/>
    </location>
</feature>
<feature type="compositionally biased region" description="Basic and acidic residues" evidence="4">
    <location>
        <begin position="251"/>
        <end position="266"/>
    </location>
</feature>
<feature type="compositionally biased region" description="Low complexity" evidence="4">
    <location>
        <begin position="340"/>
        <end position="365"/>
    </location>
</feature>
<feature type="compositionally biased region" description="Polar residues" evidence="4">
    <location>
        <begin position="497"/>
        <end position="508"/>
    </location>
</feature>
<feature type="compositionally biased region" description="Low complexity" evidence="4">
    <location>
        <begin position="715"/>
        <end position="727"/>
    </location>
</feature>
<feature type="compositionally biased region" description="Polar residues" evidence="4">
    <location>
        <begin position="764"/>
        <end position="779"/>
    </location>
</feature>
<feature type="compositionally biased region" description="Basic and acidic residues" evidence="4">
    <location>
        <begin position="796"/>
        <end position="810"/>
    </location>
</feature>
<feature type="modified residue" description="Phosphoserine" evidence="16">
    <location>
        <position position="41"/>
    </location>
</feature>
<feature type="modified residue" description="Phosphoserine" evidence="16">
    <location>
        <position position="159"/>
    </location>
</feature>
<feature type="modified residue" description="Phosphoserine" evidence="16">
    <location>
        <position position="174"/>
    </location>
</feature>
<feature type="modified residue" description="Phosphoserine" evidence="16">
    <location>
        <position position="191"/>
    </location>
</feature>
<feature type="modified residue" description="Phosphoserine" evidence="16">
    <location>
        <position position="349"/>
    </location>
</feature>
<feature type="modified residue" description="Phosphoserine" evidence="16">
    <location>
        <position position="351"/>
    </location>
</feature>
<feature type="modified residue" description="Phosphothreonine" evidence="16">
    <location>
        <position position="352"/>
    </location>
</feature>
<feature type="modified residue" description="Phosphoserine" evidence="16">
    <location>
        <position position="355"/>
    </location>
</feature>
<feature type="modified residue" description="Phosphoserine" evidence="16">
    <location>
        <position position="358"/>
    </location>
</feature>
<feature type="modified residue" description="Phosphothreonine" evidence="16">
    <location>
        <position position="360"/>
    </location>
</feature>
<feature type="modified residue" description="Phosphoserine" evidence="1">
    <location>
        <position position="371"/>
    </location>
</feature>
<feature type="modified residue" description="Phosphoserine" evidence="16">
    <location>
        <position position="423"/>
    </location>
</feature>
<feature type="modified residue" description="Phosphoserine" evidence="16">
    <location>
        <position position="484"/>
    </location>
</feature>
<feature type="modified residue" description="Phosphothreonine" evidence="16">
    <location>
        <position position="485"/>
    </location>
</feature>
<feature type="modified residue" description="Phosphoserine" evidence="16">
    <location>
        <position position="487"/>
    </location>
</feature>
<feature type="modified residue" description="Phosphothreonine" evidence="16">
    <location>
        <position position="488"/>
    </location>
</feature>
<feature type="modified residue" description="Phosphoserine" evidence="16">
    <location>
        <position position="492"/>
    </location>
</feature>
<feature type="modified residue" description="Phosphothreonine" evidence="16">
    <location>
        <position position="494"/>
    </location>
</feature>
<feature type="modified residue" description="Phosphoserine" evidence="16">
    <location>
        <position position="496"/>
    </location>
</feature>
<feature type="modified residue" description="Phosphoserine" evidence="16">
    <location>
        <position position="520"/>
    </location>
</feature>
<feature type="modified residue" description="Phosphoserine" evidence="16">
    <location>
        <position position="530"/>
    </location>
</feature>
<feature type="modified residue" description="Phosphoserine" evidence="16">
    <location>
        <position position="544"/>
    </location>
</feature>
<feature type="modified residue" description="Phosphoserine" evidence="16">
    <location>
        <position position="548"/>
    </location>
</feature>
<feature type="modified residue" description="Phosphoserine" evidence="16">
    <location>
        <position position="605"/>
    </location>
</feature>
<feature type="modified residue" description="Phosphoserine" evidence="16">
    <location>
        <position position="606"/>
    </location>
</feature>
<feature type="modified residue" description="Phosphoserine" evidence="16">
    <location>
        <position position="651"/>
    </location>
</feature>
<feature type="modified residue" description="Phosphoserine" evidence="16">
    <location>
        <position position="687"/>
    </location>
</feature>
<feature type="modified residue" description="Phosphoserine" evidence="16">
    <location>
        <position position="718"/>
    </location>
</feature>
<feature type="modified residue" description="Phosphoserine" evidence="16">
    <location>
        <position position="724"/>
    </location>
</feature>
<feature type="modified residue" description="Phosphoserine" evidence="16">
    <location>
        <position position="728"/>
    </location>
</feature>
<feature type="modified residue" description="Phosphoserine" evidence="16">
    <location>
        <position position="810"/>
    </location>
</feature>
<feature type="modified residue" description="Phosphothreonine" evidence="16">
    <location>
        <position position="822"/>
    </location>
</feature>
<feature type="modified residue" description="Phosphoserine" evidence="16">
    <location>
        <position position="826"/>
    </location>
</feature>
<feature type="modified residue" description="Phosphoserine" evidence="16">
    <location>
        <position position="840"/>
    </location>
</feature>
<feature type="modified residue" description="Phosphothreonine" evidence="16">
    <location>
        <position position="842"/>
    </location>
</feature>
<feature type="modified residue" description="Phosphoserine" evidence="16">
    <location>
        <position position="892"/>
    </location>
</feature>
<feature type="splice variant" id="VSP_007652" description="In isoform 2." evidence="18 20 21">
    <location>
        <begin position="1"/>
        <end position="35"/>
    </location>
</feature>
<feature type="mutagenesis site" description="In 123-1A: Reduced interaction with G-actin, leading to a constitutively active SRF-MRTFA complex; when associated with A-68 and A-112." evidence="8">
    <original>R</original>
    <variation>A</variation>
    <location>
        <position position="24"/>
    </location>
</feature>
<feature type="mutagenesis site" description="Induces a nuclear accumulation in unstimulated cells." evidence="12">
    <original>F</original>
    <variation>A</variation>
    <variation>D</variation>
    <location>
        <position position="45"/>
    </location>
</feature>
<feature type="mutagenesis site" description="Induces a nuclear accumulation in unstimulated cells." evidence="12">
    <original>Q</original>
    <variation>A</variation>
    <variation>D</variation>
    <location>
        <position position="48"/>
    </location>
</feature>
<feature type="mutagenesis site" description="Induces a nuclear accumulation in unstimulated cells." evidence="12">
    <original>L</original>
    <variation>A</variation>
    <variation>D</variation>
    <location>
        <position position="52"/>
    </location>
</feature>
<feature type="mutagenesis site" description="Impaired interaction with G-actin, leading to nuclear accumulation in unstimulated cells." evidence="12">
    <original>R</original>
    <variation>A</variation>
    <location>
        <position position="54"/>
    </location>
</feature>
<feature type="mutagenesis site" description="Impaired interaction with G-actin, leading to nuclear accumulation in unstimulated cells." evidence="12">
    <original>R</original>
    <variation>A</variation>
    <location>
        <position position="56"/>
    </location>
</feature>
<feature type="mutagenesis site" description="Impaired localization to the nucleus." evidence="11">
    <original>KRK</original>
    <variation>AAA</variation>
    <location>
        <begin position="62"/>
        <end position="64"/>
    </location>
</feature>
<feature type="mutagenesis site" description="In 123-1A: Reduced interaction with G-actin, leading to a constitutively active SRF-MRTFA complex; when associated with A-24 and A-112." evidence="8">
    <original>R</original>
    <variation>A</variation>
    <location>
        <position position="68"/>
    </location>
</feature>
<feature type="mutagenesis site" description="Does not induce a nuclear accumulation in unstimulated cells." evidence="12">
    <original>L</original>
    <variation>A</variation>
    <variation>D</variation>
    <location>
        <position position="89"/>
    </location>
</feature>
<feature type="mutagenesis site" description="Does not induce a nuclear accumulation in unstimulated cells." evidence="12">
    <original>K</original>
    <variation>A</variation>
    <variation>D</variation>
    <location>
        <position position="92"/>
    </location>
</feature>
<feature type="mutagenesis site" description="Impaired localization to the nucleus." evidence="11">
    <original>KLK</original>
    <variation>AAA</variation>
    <location>
        <begin position="95"/>
        <end position="97"/>
    </location>
</feature>
<feature type="mutagenesis site" description="Induces a nuclear accumulation in unstimulated cells." evidence="12">
    <original>L</original>
    <variation>A</variation>
    <location>
        <position position="96"/>
    </location>
</feature>
<feature type="mutagenesis site" description="Induces a nuclear decrease in unstimulated cells." evidence="12">
    <original>L</original>
    <variation>D</variation>
    <location>
        <position position="96"/>
    </location>
</feature>
<feature type="mutagenesis site" description="Impaired interaction with G-actin, leading to cytoplasmic accumulation." evidence="12">
    <original>R</original>
    <variation>A</variation>
    <location>
        <position position="98"/>
    </location>
</feature>
<feature type="mutagenesis site" description="Impaired interaction with G-actin, leading to cytoplasmic accumulation." evidence="12">
    <original>R</original>
    <variation>A</variation>
    <location>
        <position position="100"/>
    </location>
</feature>
<feature type="mutagenesis site" description="In 123-1A: Reduced interaction with G-actin, leading to a constitutively active SRF-MRTFA complex; when associated with A-24 and A-68." evidence="8">
    <original>R</original>
    <variation>A</variation>
    <location>
        <position position="112"/>
    </location>
</feature>
<feature type="sequence conflict" description="In Ref. 3; BAC31809." evidence="24" ref="3">
    <original>E</original>
    <variation>Q</variation>
    <location>
        <position position="53"/>
    </location>
</feature>
<feature type="sequence conflict" description="In Ref. 3; BAC40873." evidence="24" ref="3">
    <original>S</original>
    <variation>D</variation>
    <location>
        <position position="724"/>
    </location>
</feature>
<feature type="sequence conflict" description="In Ref. 1; AAM94258." evidence="24" ref="1">
    <original>S</original>
    <variation>F</variation>
    <location>
        <position position="728"/>
    </location>
</feature>
<feature type="helix" evidence="28">
    <location>
        <begin position="15"/>
        <end position="23"/>
    </location>
</feature>
<feature type="helix" evidence="28">
    <location>
        <begin position="27"/>
        <end position="32"/>
    </location>
</feature>
<feature type="strand" evidence="30">
    <location>
        <begin position="39"/>
        <end position="41"/>
    </location>
</feature>
<feature type="helix" evidence="29">
    <location>
        <begin position="59"/>
        <end position="66"/>
    </location>
</feature>
<feature type="helix" evidence="29">
    <location>
        <begin position="71"/>
        <end position="76"/>
    </location>
</feature>
<feature type="helix" evidence="31">
    <location>
        <begin position="87"/>
        <end position="110"/>
    </location>
</feature>
<feature type="helix" evidence="31">
    <location>
        <begin position="115"/>
        <end position="120"/>
    </location>
</feature>
<name>MRTFA_MOUSE</name>
<dbReference type="EMBL" id="AF385582">
    <property type="protein sequence ID" value="AAM94258.1"/>
    <property type="molecule type" value="mRNA"/>
</dbReference>
<dbReference type="EMBL" id="AF532597">
    <property type="protein sequence ID" value="AAN33041.1"/>
    <property type="molecule type" value="mRNA"/>
</dbReference>
<dbReference type="EMBL" id="AK044188">
    <property type="protein sequence ID" value="BAC31809.1"/>
    <property type="molecule type" value="mRNA"/>
</dbReference>
<dbReference type="EMBL" id="AK089416">
    <property type="protein sequence ID" value="BAC40873.1"/>
    <property type="molecule type" value="mRNA"/>
</dbReference>
<dbReference type="EMBL" id="BC050941">
    <property type="protein sequence ID" value="AAH50941.1"/>
    <property type="molecule type" value="mRNA"/>
</dbReference>
<dbReference type="CCDS" id="CCDS37147.1">
    <molecule id="Q8K4J6-1"/>
</dbReference>
<dbReference type="RefSeq" id="NP_001076005.1">
    <property type="nucleotide sequence ID" value="NM_001082536.1"/>
</dbReference>
<dbReference type="RefSeq" id="NP_694629.2">
    <molecule id="Q8K4J6-1"/>
    <property type="nucleotide sequence ID" value="NM_153049.3"/>
</dbReference>
<dbReference type="PDB" id="2V51">
    <property type="method" value="X-ray"/>
    <property type="resolution" value="2.35 A"/>
    <property type="chains" value="E/F=16-41"/>
</dbReference>
<dbReference type="PDB" id="2V52">
    <property type="method" value="X-ray"/>
    <property type="resolution" value="1.45 A"/>
    <property type="chains" value="M=54-85"/>
</dbReference>
<dbReference type="PDB" id="2YJE">
    <property type="method" value="X-ray"/>
    <property type="resolution" value="3.10 A"/>
    <property type="chains" value="M=16-142"/>
</dbReference>
<dbReference type="PDB" id="2YJF">
    <property type="method" value="X-ray"/>
    <property type="resolution" value="3.50 A"/>
    <property type="chains" value="M=16-142"/>
</dbReference>
<dbReference type="PDBsum" id="2V51"/>
<dbReference type="PDBsum" id="2V52"/>
<dbReference type="PDBsum" id="2YJE"/>
<dbReference type="PDBsum" id="2YJF"/>
<dbReference type="SMR" id="Q8K4J6"/>
<dbReference type="BioGRID" id="230180">
    <property type="interactions" value="3"/>
</dbReference>
<dbReference type="DIP" id="DIP-60884N"/>
<dbReference type="ELM" id="Q8K4J6"/>
<dbReference type="FunCoup" id="Q8K4J6">
    <property type="interactions" value="3712"/>
</dbReference>
<dbReference type="IntAct" id="Q8K4J6">
    <property type="interactions" value="7"/>
</dbReference>
<dbReference type="MINT" id="Q8K4J6"/>
<dbReference type="STRING" id="10090.ENSMUSP00000105207"/>
<dbReference type="GlyGen" id="Q8K4J6">
    <property type="glycosylation" value="7 sites, 1 O-linked glycan (4 sites)"/>
</dbReference>
<dbReference type="iPTMnet" id="Q8K4J6"/>
<dbReference type="PhosphoSitePlus" id="Q8K4J6"/>
<dbReference type="PaxDb" id="10090-ENSMUSP00000105207"/>
<dbReference type="ProteomicsDB" id="295952">
    <molecule id="Q8K4J6-1"/>
</dbReference>
<dbReference type="ProteomicsDB" id="295953">
    <molecule id="Q8K4J6-2"/>
</dbReference>
<dbReference type="Pumba" id="Q8K4J6"/>
<dbReference type="Antibodypedia" id="26780">
    <property type="antibodies" value="366 antibodies from 33 providers"/>
</dbReference>
<dbReference type="DNASU" id="223701"/>
<dbReference type="Ensembl" id="ENSMUST00000109579.9">
    <molecule id="Q8K4J6-1"/>
    <property type="protein sequence ID" value="ENSMUSP00000105207.3"/>
    <property type="gene ID" value="ENSMUSG00000042292.19"/>
</dbReference>
<dbReference type="Ensembl" id="ENSMUST00000149582.8">
    <molecule id="Q8K4J6-2"/>
    <property type="protein sequence ID" value="ENSMUSP00000117745.2"/>
    <property type="gene ID" value="ENSMUSG00000042292.19"/>
</dbReference>
<dbReference type="GeneID" id="223701"/>
<dbReference type="KEGG" id="mmu:223701"/>
<dbReference type="UCSC" id="uc007wwc.2">
    <molecule id="Q8K4J6-1"/>
    <property type="organism name" value="mouse"/>
</dbReference>
<dbReference type="AGR" id="MGI:2384495"/>
<dbReference type="CTD" id="57591"/>
<dbReference type="MGI" id="MGI:2384495">
    <property type="gene designation" value="Mrtfa"/>
</dbReference>
<dbReference type="VEuPathDB" id="HostDB:ENSMUSG00000042292"/>
<dbReference type="eggNOG" id="ENOG502R5FB">
    <property type="taxonomic scope" value="Eukaryota"/>
</dbReference>
<dbReference type="GeneTree" id="ENSGT00950000182979"/>
<dbReference type="InParanoid" id="Q8K4J6"/>
<dbReference type="PhylomeDB" id="Q8K4J6"/>
<dbReference type="TreeFam" id="TF326024"/>
<dbReference type="Reactome" id="R-MMU-3899300">
    <property type="pathway name" value="SUMOylation of transcription cofactors"/>
</dbReference>
<dbReference type="Reactome" id="R-MMU-5663220">
    <property type="pathway name" value="RHO GTPases Activate Formins"/>
</dbReference>
<dbReference type="BioGRID-ORCS" id="223701">
    <property type="hits" value="5 hits in 79 CRISPR screens"/>
</dbReference>
<dbReference type="ChiTaRS" id="Smarca4">
    <property type="organism name" value="mouse"/>
</dbReference>
<dbReference type="EvolutionaryTrace" id="Q8K4J6"/>
<dbReference type="PRO" id="PR:Q8K4J6"/>
<dbReference type="Proteomes" id="UP000000589">
    <property type="component" value="Chromosome 15"/>
</dbReference>
<dbReference type="RNAct" id="Q8K4J6">
    <property type="molecule type" value="protein"/>
</dbReference>
<dbReference type="Bgee" id="ENSMUSG00000042292">
    <property type="expression patterns" value="Expressed in granulocyte and 251 other cell types or tissues"/>
</dbReference>
<dbReference type="ExpressionAtlas" id="Q8K4J6">
    <property type="expression patterns" value="baseline and differential"/>
</dbReference>
<dbReference type="GO" id="GO:0005737">
    <property type="term" value="C:cytoplasm"/>
    <property type="evidence" value="ECO:0000314"/>
    <property type="project" value="UniProtKB"/>
</dbReference>
<dbReference type="GO" id="GO:0005829">
    <property type="term" value="C:cytosol"/>
    <property type="evidence" value="ECO:0007669"/>
    <property type="project" value="Ensembl"/>
</dbReference>
<dbReference type="GO" id="GO:0098978">
    <property type="term" value="C:glutamatergic synapse"/>
    <property type="evidence" value="ECO:0007669"/>
    <property type="project" value="Ensembl"/>
</dbReference>
<dbReference type="GO" id="GO:0005654">
    <property type="term" value="C:nucleoplasm"/>
    <property type="evidence" value="ECO:0007669"/>
    <property type="project" value="Ensembl"/>
</dbReference>
<dbReference type="GO" id="GO:0005634">
    <property type="term" value="C:nucleus"/>
    <property type="evidence" value="ECO:0000314"/>
    <property type="project" value="UniProtKB"/>
</dbReference>
<dbReference type="GO" id="GO:0098794">
    <property type="term" value="C:postsynapse"/>
    <property type="evidence" value="ECO:0007669"/>
    <property type="project" value="Ensembl"/>
</dbReference>
<dbReference type="GO" id="GO:0098793">
    <property type="term" value="C:presynapse"/>
    <property type="evidence" value="ECO:0007669"/>
    <property type="project" value="Ensembl"/>
</dbReference>
<dbReference type="GO" id="GO:0003779">
    <property type="term" value="F:actin binding"/>
    <property type="evidence" value="ECO:0000314"/>
    <property type="project" value="MGI"/>
</dbReference>
<dbReference type="GO" id="GO:0003785">
    <property type="term" value="F:actin monomer binding"/>
    <property type="evidence" value="ECO:0000314"/>
    <property type="project" value="UniProtKB"/>
</dbReference>
<dbReference type="GO" id="GO:0003700">
    <property type="term" value="F:DNA-binding transcription factor activity"/>
    <property type="evidence" value="ECO:0000314"/>
    <property type="project" value="MGI"/>
</dbReference>
<dbReference type="GO" id="GO:0060090">
    <property type="term" value="F:molecular adaptor activity"/>
    <property type="evidence" value="ECO:0000269"/>
    <property type="project" value="DisProt"/>
</dbReference>
<dbReference type="GO" id="GO:0000976">
    <property type="term" value="F:transcription cis-regulatory region binding"/>
    <property type="evidence" value="ECO:0000314"/>
    <property type="project" value="MGI"/>
</dbReference>
<dbReference type="GO" id="GO:0003713">
    <property type="term" value="F:transcription coactivator activity"/>
    <property type="evidence" value="ECO:0000314"/>
    <property type="project" value="UniProtKB"/>
</dbReference>
<dbReference type="GO" id="GO:0030036">
    <property type="term" value="P:actin cytoskeleton organization"/>
    <property type="evidence" value="ECO:0000314"/>
    <property type="project" value="UniProtKB"/>
</dbReference>
<dbReference type="GO" id="GO:0030900">
    <property type="term" value="P:forebrain development"/>
    <property type="evidence" value="ECO:0000316"/>
    <property type="project" value="MGI"/>
</dbReference>
<dbReference type="GO" id="GO:2001234">
    <property type="term" value="P:negative regulation of apoptotic signaling pathway"/>
    <property type="evidence" value="ECO:0000314"/>
    <property type="project" value="MGI"/>
</dbReference>
<dbReference type="GO" id="GO:0001764">
    <property type="term" value="P:neuron migration"/>
    <property type="evidence" value="ECO:0000316"/>
    <property type="project" value="MGI"/>
</dbReference>
<dbReference type="GO" id="GO:0031175">
    <property type="term" value="P:neuron projection development"/>
    <property type="evidence" value="ECO:0000316"/>
    <property type="project" value="MGI"/>
</dbReference>
<dbReference type="GO" id="GO:0045893">
    <property type="term" value="P:positive regulation of DNA-templated transcription"/>
    <property type="evidence" value="ECO:0000314"/>
    <property type="project" value="MGI"/>
</dbReference>
<dbReference type="GO" id="GO:0045944">
    <property type="term" value="P:positive regulation of transcription by RNA polymerase II"/>
    <property type="evidence" value="ECO:0000314"/>
    <property type="project" value="UniProtKB"/>
</dbReference>
<dbReference type="GO" id="GO:0099159">
    <property type="term" value="P:regulation of modification of postsynaptic structure"/>
    <property type="evidence" value="ECO:0007669"/>
    <property type="project" value="Ensembl"/>
</dbReference>
<dbReference type="DisProt" id="DP01999"/>
<dbReference type="FunFam" id="1.10.720.30:FF:000002">
    <property type="entry name" value="Myocardin related transcription factor A"/>
    <property type="match status" value="1"/>
</dbReference>
<dbReference type="Gene3D" id="6.10.140.2040">
    <property type="match status" value="1"/>
</dbReference>
<dbReference type="Gene3D" id="6.10.150.10">
    <property type="match status" value="1"/>
</dbReference>
<dbReference type="Gene3D" id="1.10.720.30">
    <property type="entry name" value="SAP domain"/>
    <property type="match status" value="1"/>
</dbReference>
<dbReference type="IDEAL" id="IID50055"/>
<dbReference type="InterPro" id="IPR043451">
    <property type="entry name" value="Myocardin-like"/>
</dbReference>
<dbReference type="InterPro" id="IPR004018">
    <property type="entry name" value="RPEL_repeat"/>
</dbReference>
<dbReference type="InterPro" id="IPR003034">
    <property type="entry name" value="SAP_dom"/>
</dbReference>
<dbReference type="InterPro" id="IPR036361">
    <property type="entry name" value="SAP_dom_sf"/>
</dbReference>
<dbReference type="PANTHER" id="PTHR22793:SF6">
    <property type="entry name" value="MYOCARDIN-RELATED TRANSCRIPTION FACTOR A"/>
    <property type="match status" value="1"/>
</dbReference>
<dbReference type="PANTHER" id="PTHR22793">
    <property type="entry name" value="MYOCARDIN-RELATED TRANSCRIPTION FACTOR-RELATED"/>
    <property type="match status" value="1"/>
</dbReference>
<dbReference type="Pfam" id="PF02755">
    <property type="entry name" value="RPEL"/>
    <property type="match status" value="3"/>
</dbReference>
<dbReference type="Pfam" id="PF02037">
    <property type="entry name" value="SAP"/>
    <property type="match status" value="1"/>
</dbReference>
<dbReference type="SMART" id="SM00707">
    <property type="entry name" value="RPEL"/>
    <property type="match status" value="3"/>
</dbReference>
<dbReference type="SMART" id="SM00513">
    <property type="entry name" value="SAP"/>
    <property type="match status" value="1"/>
</dbReference>
<dbReference type="SUPFAM" id="SSF68906">
    <property type="entry name" value="SAP domain"/>
    <property type="match status" value="1"/>
</dbReference>
<dbReference type="PROSITE" id="PS51073">
    <property type="entry name" value="RPEL"/>
    <property type="match status" value="3"/>
</dbReference>
<dbReference type="PROSITE" id="PS50800">
    <property type="entry name" value="SAP"/>
    <property type="match status" value="1"/>
</dbReference>
<gene>
    <name type="primary">Mrtfa</name>
    <name evidence="17" type="synonym">Bsac</name>
    <name evidence="19 22" type="synonym">Mal</name>
    <name evidence="25" type="synonym">Mkl1</name>
</gene>
<keyword id="KW-0002">3D-structure</keyword>
<keyword id="KW-0009">Actin-binding</keyword>
<keyword id="KW-0025">Alternative splicing</keyword>
<keyword id="KW-0175">Coiled coil</keyword>
<keyword id="KW-0963">Cytoplasm</keyword>
<keyword id="KW-0539">Nucleus</keyword>
<keyword id="KW-0597">Phosphoprotein</keyword>
<keyword id="KW-1185">Reference proteome</keyword>
<keyword id="KW-0677">Repeat</keyword>
<keyword id="KW-0804">Transcription</keyword>
<keyword id="KW-0805">Transcription regulation</keyword>
<evidence type="ECO:0000250" key="1">
    <source>
        <dbReference type="UniProtKB" id="Q969V6"/>
    </source>
</evidence>
<evidence type="ECO:0000255" key="2"/>
<evidence type="ECO:0000255" key="3">
    <source>
        <dbReference type="PROSITE-ProRule" id="PRU00186"/>
    </source>
</evidence>
<evidence type="ECO:0000256" key="4">
    <source>
        <dbReference type="SAM" id="MobiDB-lite"/>
    </source>
</evidence>
<evidence type="ECO:0000269" key="5">
    <source>
    </source>
</evidence>
<evidence type="ECO:0000269" key="6">
    <source>
    </source>
</evidence>
<evidence type="ECO:0000269" key="7">
    <source>
    </source>
</evidence>
<evidence type="ECO:0000269" key="8">
    <source>
    </source>
</evidence>
<evidence type="ECO:0000269" key="9">
    <source>
    </source>
</evidence>
<evidence type="ECO:0000269" key="10">
    <source>
    </source>
</evidence>
<evidence type="ECO:0000269" key="11">
    <source>
    </source>
</evidence>
<evidence type="ECO:0000269" key="12">
    <source>
    </source>
</evidence>
<evidence type="ECO:0000269" key="13">
    <source>
    </source>
</evidence>
<evidence type="ECO:0000269" key="14">
    <source>
    </source>
</evidence>
<evidence type="ECO:0000269" key="15">
    <source>
    </source>
</evidence>
<evidence type="ECO:0000269" key="16">
    <source>
    </source>
</evidence>
<evidence type="ECO:0000303" key="17">
    <source>
    </source>
</evidence>
<evidence type="ECO:0000303" key="18">
    <source>
    </source>
</evidence>
<evidence type="ECO:0000303" key="19">
    <source>
    </source>
</evidence>
<evidence type="ECO:0000303" key="20">
    <source>
    </source>
</evidence>
<evidence type="ECO:0000303" key="21">
    <source>
    </source>
</evidence>
<evidence type="ECO:0000303" key="22">
    <source>
    </source>
</evidence>
<evidence type="ECO:0000303" key="23">
    <source>
    </source>
</evidence>
<evidence type="ECO:0000305" key="24"/>
<evidence type="ECO:0000312" key="25">
    <source>
        <dbReference type="MGI" id="MGI:2384495"/>
    </source>
</evidence>
<evidence type="ECO:0007744" key="26">
    <source>
        <dbReference type="PDB" id="2YJE"/>
    </source>
</evidence>
<evidence type="ECO:0007744" key="27">
    <source>
        <dbReference type="PDB" id="2YJF"/>
    </source>
</evidence>
<evidence type="ECO:0007829" key="28">
    <source>
        <dbReference type="PDB" id="2V51"/>
    </source>
</evidence>
<evidence type="ECO:0007829" key="29">
    <source>
        <dbReference type="PDB" id="2V52"/>
    </source>
</evidence>
<evidence type="ECO:0007829" key="30">
    <source>
        <dbReference type="PDB" id="2YJE"/>
    </source>
</evidence>
<evidence type="ECO:0007829" key="31">
    <source>
        <dbReference type="PDB" id="2YJF"/>
    </source>
</evidence>
<comment type="function">
    <text evidence="5 7 8 10 13 14 15">Transcription coactivator that associates with the serum response factor (SRF) transcription factor to control expression of genes regulating the cytoskeleton during development, morphogenesis and cell migration (PubMed:12019265, PubMed:12732141, PubMed:17588931, PubMed:19350017, PubMed:24732378). The SRF-MRTFA complex activity responds to Rho GTPase-induced changes in cellular globular actin (G-actin) concentration, thereby coupling cytoskeletal gene expression to cytoskeletal dynamics (PubMed:24732378). MRTFA binds G-actin via its RPEL repeats, regulating activity of the MRTFA-SRF complex (PubMed:12732141, PubMed:17588931). Activity is also regulated by filamentous actin (F-actin) in the nucleus (PubMed:23558171, PubMed:25759381).</text>
</comment>
<comment type="subunit">
    <text evidence="1 7 8 9 10 12 16">Interacts with SRF, forming the SRF-MRTFA nuclear complex which binds the 5'-CArG-3' consensus motif (CArG box) on DNA via SRF (PubMed:12732141, PubMed:19350017). Interacts (via RPEL repeats) with globular actin (G-actin), thereby regulating its subcellular location and activity of the complex formed with SRF (PubMed:12732141, PubMed:17588931, PubMed:19008859, PubMed:19350017, PubMed:21673315, PubMed:27304076). Either forms a trivalent (by binding three G-actin monomers) or pentavalent (by binding five G-actin monomers) complex with G-actin (PubMed:21673315). Forms a nuclear ternary complex with SCAI and SRF, leading to suppress MRTFA-induced SRF transcriptional activity (PubMed:19350017). Interacts with beta-actin (ACTB); interaction with ACTB prevents interaction with SCAI (PubMed:19350017). Interacts with MRTFB (By similarity).</text>
</comment>
<comment type="interaction">
    <interactant intactId="EBI-8291665">
        <id>Q8K4J6</id>
    </interactant>
    <interactant intactId="EBI-367540">
        <id>P68135</id>
        <label>ACTA1</label>
    </interactant>
    <organismsDiffer>true</organismsDiffer>
    <experiments>15</experiments>
</comment>
<comment type="interaction">
    <interactant intactId="EBI-8291665">
        <id>Q8K4J6</id>
    </interactant>
    <interactant intactId="EBI-353944">
        <id>P60709</id>
        <label>ACTB</label>
    </interactant>
    <organismsDiffer>true</organismsDiffer>
    <experiments>3</experiments>
</comment>
<comment type="interaction">
    <interactant intactId="EBI-8291665">
        <id>Q8K4J6</id>
    </interactant>
    <interactant intactId="EBI-396343">
        <id>O00629</id>
        <label>KPNA4</label>
    </interactant>
    <organismsDiffer>true</organismsDiffer>
    <experiments>4</experiments>
</comment>
<comment type="interaction">
    <interactant intactId="EBI-8291665">
        <id>Q8K4J6</id>
    </interactant>
    <interactant intactId="EBI-286758">
        <id>Q14974</id>
        <label>KPNB1</label>
    </interactant>
    <organismsDiffer>true</organismsDiffer>
    <experiments>2</experiments>
</comment>
<comment type="subcellular location">
    <subcellularLocation>
        <location evidence="7 8 9 12 15 16">Cytoplasm</location>
    </subcellularLocation>
    <subcellularLocation>
        <location evidence="5 7 8 9 11 12 15 16">Nucleus</location>
    </subcellularLocation>
    <text evidence="1 8 11 12">Subcellular location is tightly regulated by actin both in cytoplasm and nucleus: high levels of G-actin in the nucleus observed during serum deprivation lead to low levels of nuclear MRTFA, while reduced levels of nuclear G-actin result in accumulation of MRTFA in the nucleus (PubMed:17588931, PubMed:21673315). G-actin-binding in the cytoplasm inhibits nuclear import by masking the nuclear localization signal (NLS) (PubMed:17588931, PubMed:20818336, PubMed:21673315). In contrast, binding to nuclear globular actin (G-actin) promotes nuclear export to the cytoplasm (PubMed:17588931). Nuclear localization is regulated by MICAL2, which mediates depolymerization of nuclear actin, which decreases nuclear G-actin pool, thereby promoting retention of MRTFA in the nucleus and subsequent formation of an active complex with SRF (By similarity). Nuclear import is mediated by importins KPNA4 and KPNB1 (PubMed:20818336).</text>
</comment>
<comment type="alternative products">
    <event type="alternative splicing"/>
    <isoform>
        <id>Q8K4J6-1</id>
        <name>1</name>
        <sequence type="displayed"/>
    </isoform>
    <isoform>
        <id>Q8K4J6-2</id>
        <name>2</name>
        <sequence type="described" ref="VSP_007652"/>
    </isoform>
</comment>
<comment type="tissue specificity">
    <text evidence="5">Expressed in heart, brain, spleen, lung, liver, muscle, kidney and testis.</text>
</comment>
<comment type="developmental stage">
    <text evidence="6">Detected throughout the embryo at 10.5 dpc; higher expression is found at 13.5 dpc in neural mesenchymal cells, skeletal muscle of the tongue, and epithelial cells of the colon and small intestine; at 15.5 dpc, expression in epithelial cells of lung, kidney, bladder, and colon is also detected.</text>
</comment>
<comment type="domain">
    <text evidence="9">The N-terminal region is required for nuclear localization and the C-terminal region mediates transcriptional activity.</text>
</comment>
<comment type="domain">
    <text evidence="9 12">The RPEL repeats mediate binding to globular actin (G-actin); each RPEL repeat-binding to one G-actin monomer (PubMed:19008859, PubMed:21673315). In addition, each intervening spacer sequence region can bind one G-actin monomer, to reach a pentavalent complex (PubMed:21673315).</text>
</comment>
<comment type="PTM">
    <text evidence="16">Phosphorylation at Ser-41 by Erk inhibits binding of globular actin (G-actin), unmasking the nuclear localization signal (NLS) and promoting nuclear import.</text>
</comment>
<comment type="caution">
    <text evidence="7 16">Some publications use a protein sequence that is longer at the N-terminus and is based on an artificial construct (PubMed:12732141, PubMed:27304076). The sequence used in these publications modifies a non-canonical CTG leucine codon upstream of the initiator codon into ATG, generating a protein of 1021 residues (PubMed:12732141, PubMed:27304076). The existence of this form has not been confirmed in vivo and is therefore unsure (PubMed:12732141, PubMed:27304076). Similarly, the existence of the S33 ('Ser-33') phosphorylation site described in Panayiotou et al. is unsure (PubMed:27304076).</text>
</comment>